<comment type="function">
    <text evidence="8">Heterodimer CA-CB: Crotoxin is a potent presynaptic neurotoxin that possesses phospholipase A2 (PLA2) activity and exerts a lethal action by blocking neuromuscular transmission. It consists of a non-covalent association of a basic and weakly toxic PLA2 subunit (CBa2, CBb, CBc, or CBd), with a small acidic, non-enzymatic and non-toxic subunit (CA1, CA2, CA3 or CA4). The complex acts by binding to a specific 48-kDa protein (R48) receptor located on presynaptic membranes, forming a transient ternary complex CA-CB-R48, followed by dissociation of the CA-CB complex and release of the CA subunit. At equilibrium, only the CB subunits remain associated with the specific crotoxin receptor. In addition to neurotoxicity, crotoxin has been found to exert myotoxicity, nephrotoxicity, and cardiovascular toxicity (PubMed:20109480). Moreover, anti-inflammatory, immunomodulatory, anti-tumor and analgesic effects of crotoxin have also been reported (PubMed:20109480).</text>
</comment>
<comment type="function">
    <text evidence="6 10">Monomer CBa2: The basic subunit of crotoxin is a snake venom phospholipase A2 (PLA2) that exhibits weak neurotoxicity (10-fold less than the heterodimer) and strong anticoagulant effects by binding to factor Xa (F10) and inhibiting the prothrombinase activity (IC(50) is 41 nM) (PubMed:18062812). In addition, it shows the same effects described for the heterodimer and binds the nucleotide-binding domain (NBD1) of CFTR chloride channels and increases the channel current (PubMed:27241308). PLA2 catalyzes the calcium-dependent hydrolysis of the 2-acyl groups in 3-sn-phosphoglycerides.</text>
</comment>
<comment type="catalytic activity">
    <reaction evidence="3 4">
        <text>a 1,2-diacyl-sn-glycero-3-phosphocholine + H2O = a 1-acyl-sn-glycero-3-phosphocholine + a fatty acid + H(+)</text>
        <dbReference type="Rhea" id="RHEA:15801"/>
        <dbReference type="ChEBI" id="CHEBI:15377"/>
        <dbReference type="ChEBI" id="CHEBI:15378"/>
        <dbReference type="ChEBI" id="CHEBI:28868"/>
        <dbReference type="ChEBI" id="CHEBI:57643"/>
        <dbReference type="ChEBI" id="CHEBI:58168"/>
        <dbReference type="EC" id="3.1.1.4"/>
    </reaction>
</comment>
<comment type="cofactor">
    <cofactor evidence="2">
        <name>Ca(2+)</name>
        <dbReference type="ChEBI" id="CHEBI:29108"/>
    </cofactor>
    <text evidence="2">Binds 1 Ca(2+) ion.</text>
</comment>
<comment type="biophysicochemical properties">
    <kinetics>
        <KM evidence="12">0.06 uM for 1-palmitoyl-2-(10-pyrenyldecanoyl)-sn-glycero-3-monomethyl phosphatidic acid (monomer CBa2)</KM>
        <KM evidence="12">0.05 uM for 1-palmitoyl-2-(10-pyrenyldecanoyl)-sn-glycero-3-monomethyl phosphatidic acid (class 2 heterodimer CA2-CBa2)</KM>
        <KM evidence="12">0.05 uM for 1-palmitoyl-2-(10-pyrenyldecanoyl)-sn-glycero-3-monomethyl phosphatidic acid (class 2 heterodimer CA3-CBa2)</KM>
        <Vmax evidence="12">24.0 umol/min/mg enzyme (monomer CBa2)</Vmax>
        <Vmax evidence="12">25.0 umol/min/mg enzyme (class 2 heterodimer CA2-CBa2)</Vmax>
        <Vmax evidence="12">24.0 umol/min/mg enzyme (class 2 heterodimer CA3-CBa2)</Vmax>
    </kinetics>
</comment>
<comment type="subunit">
    <text evidence="7 10 12">Heterodimer of one of the acidic (CA1, CA2, CA3 or CA4) and one of the basic (CBa1, CBa2, CBb, CBc or CBd) subunits; non-covalently linked. The acidic subunit is non-toxic, without enzymatic activity and comprises 3 peptides that are cross-linked by 5 disulfide bridges. The basic subunit is toxic, has phospholipase A2 activity and is composed of a single chain. Multiple variants of each subunit give different crotoxin complexes that can be subdivided into 2 classes: (1) those of high toxicity, low PLA2 activity (CBb, CBc and CBd linked with high affinity to any CA) and high stability (K(d)=4.5 nM) and (2) those of moderate toxicity, high PLA2 activity (CBa2 linked with low affinity to any CA) and low stability (K(d)=25 nM). Interacts with human NBD1 domain of CFTR (PubMed:27241308).</text>
</comment>
<comment type="subcellular location">
    <subcellularLocation>
        <location>Secreted</location>
    </subcellularLocation>
</comment>
<comment type="tissue specificity">
    <text>Expressed by the venom gland.</text>
</comment>
<comment type="mass spectrometry"/>
<comment type="mass spectrometry"/>
<comment type="toxic dose">
    <text evidence="12">In monomer CBa2, LD(50) is 700 ug/kg by intravenous injection into mice.</text>
</comment>
<comment type="toxic dose">
    <text evidence="12">In monomer CBa2, LD(50) is &gt;3000 ug/kg by subcutaneous injection into mice.</text>
</comment>
<comment type="toxic dose">
    <text evidence="12">In class 2 heterodimer CA2-CBa2, LD(50) is 420 ug/kg by intravenous injection into mice.</text>
</comment>
<comment type="toxic dose">
    <text evidence="12">In class 2 heterodimer CA2-CBa2, LD(50) is 650 ug/kg by subcutaneous injection into mice.</text>
</comment>
<comment type="toxic dose">
    <text evidence="12">In class 2 heterodimer CA3-CBa2, LD(50) is 450 ug/kg by intravenous injection into mice.</text>
</comment>
<comment type="pharmaceutical">
    <text evidence="10">May be used to develop new agents to treat the most common mutation of cystic fibrosis (DelF508CFTR). It shows a double function: (i) as a potentiator, by increasing the chloride channel current, and (ii) as a corrector, by permitting DelF508CFTR to escape from the degradation pathway, facilitating its biosynthesis and subsequent delivery to the plasma membrane.</text>
</comment>
<comment type="miscellaneous">
    <text evidence="1 14">The crotoxin heterodimer is inhibited by the crotoxin inhibitor from Crotalus serum (CICS). CICS neutralizes the lethal potency of crotoxin and inhibits its PLA2 activity. CICS only binds tightly to the CB subunit and induces the dissociation of the heterodimer (By similarity). Tested on the CA2-CBd heterodimer (PubMed:10903514).</text>
</comment>
<comment type="similarity">
    <text evidence="13">Belongs to the phospholipase A2 family. Group II subfamily. D49 sub-subfamily.</text>
</comment>
<protein>
    <recommendedName>
        <fullName>Phospholipase A2 crotoxin basic chain CBa2</fullName>
        <shortName>CB2</shortName>
        <shortName>CTX subunit CBa2</shortName>
        <shortName>svPLA2</shortName>
        <ecNumber>3.1.1.4</ecNumber>
    </recommendedName>
    <alternativeName>
        <fullName>Phosphatidylcholine 2-acylhydrolase</fullName>
    </alternativeName>
</protein>
<accession>P24027</accession>
<accession>P0DJN2</accession>
<evidence type="ECO:0000250" key="1"/>
<evidence type="ECO:0000250" key="2">
    <source>
        <dbReference type="UniProtKB" id="P62022"/>
    </source>
</evidence>
<evidence type="ECO:0000255" key="3">
    <source>
        <dbReference type="PROSITE-ProRule" id="PRU10035"/>
    </source>
</evidence>
<evidence type="ECO:0000255" key="4">
    <source>
        <dbReference type="PROSITE-ProRule" id="PRU10036"/>
    </source>
</evidence>
<evidence type="ECO:0000269" key="5">
    <source>
    </source>
</evidence>
<evidence type="ECO:0000269" key="6">
    <source>
    </source>
</evidence>
<evidence type="ECO:0000269" key="7">
    <source>
    </source>
</evidence>
<evidence type="ECO:0000269" key="8">
    <source>
    </source>
</evidence>
<evidence type="ECO:0000269" key="9">
    <source>
    </source>
</evidence>
<evidence type="ECO:0000269" key="10">
    <source>
    </source>
</evidence>
<evidence type="ECO:0000269" key="11">
    <source>
    </source>
</evidence>
<evidence type="ECO:0000269" key="12">
    <source>
    </source>
</evidence>
<evidence type="ECO:0000305" key="13"/>
<evidence type="ECO:0000305" key="14">
    <source>
    </source>
</evidence>
<evidence type="ECO:0007744" key="15">
    <source>
        <dbReference type="PDB" id="2QOG"/>
    </source>
</evidence>
<evidence type="ECO:0007829" key="16">
    <source>
        <dbReference type="PDB" id="2QOG"/>
    </source>
</evidence>
<dbReference type="EC" id="3.1.1.4"/>
<dbReference type="EMBL" id="X16100">
    <property type="protein sequence ID" value="CAA34227.1"/>
    <property type="molecule type" value="mRNA"/>
</dbReference>
<dbReference type="PIR" id="S15068">
    <property type="entry name" value="PSRSB2"/>
</dbReference>
<dbReference type="PDB" id="2QOG">
    <property type="method" value="X-ray"/>
    <property type="resolution" value="2.28 A"/>
    <property type="chains" value="A/D=17-138"/>
</dbReference>
<dbReference type="PDBsum" id="2QOG"/>
<dbReference type="SMR" id="P24027"/>
<dbReference type="ComplexPortal" id="CPX-7321">
    <property type="entry name" value="Crotoxin complex, aCA1/2/4-bCA1-CBa variant"/>
</dbReference>
<dbReference type="ComplexPortal" id="CPX-7322">
    <property type="entry name" value="Crotoxin complex, aCA1/2/4-bCA2/3/4-CBa variant"/>
</dbReference>
<dbReference type="ComplexPortal" id="CPX-7343">
    <property type="entry name" value="Crotoxin complex, aCA3-bCA1-CBa variant"/>
</dbReference>
<dbReference type="ComplexPortal" id="CPX-7344">
    <property type="entry name" value="Crotoxin complex, aCA3-bCA2/3/4-CBa variant"/>
</dbReference>
<dbReference type="BRENDA" id="3.1.1.4">
    <property type="organism ID" value="1711"/>
</dbReference>
<dbReference type="SABIO-RK" id="P24027"/>
<dbReference type="EvolutionaryTrace" id="P24027"/>
<dbReference type="GO" id="GO:0005576">
    <property type="term" value="C:extracellular region"/>
    <property type="evidence" value="ECO:0007669"/>
    <property type="project" value="UniProtKB-SubCell"/>
</dbReference>
<dbReference type="GO" id="GO:0005509">
    <property type="term" value="F:calcium ion binding"/>
    <property type="evidence" value="ECO:0007669"/>
    <property type="project" value="InterPro"/>
</dbReference>
<dbReference type="GO" id="GO:0047498">
    <property type="term" value="F:calcium-dependent phospholipase A2 activity"/>
    <property type="evidence" value="ECO:0007669"/>
    <property type="project" value="TreeGrafter"/>
</dbReference>
<dbReference type="GO" id="GO:0099106">
    <property type="term" value="F:ion channel regulator activity"/>
    <property type="evidence" value="ECO:0007669"/>
    <property type="project" value="UniProtKB-KW"/>
</dbReference>
<dbReference type="GO" id="GO:0005543">
    <property type="term" value="F:phospholipid binding"/>
    <property type="evidence" value="ECO:0007669"/>
    <property type="project" value="TreeGrafter"/>
</dbReference>
<dbReference type="GO" id="GO:0090729">
    <property type="term" value="F:toxin activity"/>
    <property type="evidence" value="ECO:0007669"/>
    <property type="project" value="UniProtKB-KW"/>
</dbReference>
<dbReference type="GO" id="GO:0050482">
    <property type="term" value="P:arachidonate secretion"/>
    <property type="evidence" value="ECO:0007669"/>
    <property type="project" value="InterPro"/>
</dbReference>
<dbReference type="GO" id="GO:0016042">
    <property type="term" value="P:lipid catabolic process"/>
    <property type="evidence" value="ECO:0007669"/>
    <property type="project" value="UniProtKB-KW"/>
</dbReference>
<dbReference type="GO" id="GO:0042130">
    <property type="term" value="P:negative regulation of T cell proliferation"/>
    <property type="evidence" value="ECO:0007669"/>
    <property type="project" value="TreeGrafter"/>
</dbReference>
<dbReference type="GO" id="GO:0006644">
    <property type="term" value="P:phospholipid metabolic process"/>
    <property type="evidence" value="ECO:0007669"/>
    <property type="project" value="InterPro"/>
</dbReference>
<dbReference type="CDD" id="cd00125">
    <property type="entry name" value="PLA2c"/>
    <property type="match status" value="1"/>
</dbReference>
<dbReference type="FunFam" id="1.20.90.10:FF:000001">
    <property type="entry name" value="Basic phospholipase A2 homolog"/>
    <property type="match status" value="1"/>
</dbReference>
<dbReference type="Gene3D" id="1.20.90.10">
    <property type="entry name" value="Phospholipase A2 domain"/>
    <property type="match status" value="1"/>
</dbReference>
<dbReference type="InterPro" id="IPR001211">
    <property type="entry name" value="PLipase_A2"/>
</dbReference>
<dbReference type="InterPro" id="IPR033112">
    <property type="entry name" value="PLipase_A2_Asp_AS"/>
</dbReference>
<dbReference type="InterPro" id="IPR016090">
    <property type="entry name" value="PLipase_A2_dom"/>
</dbReference>
<dbReference type="InterPro" id="IPR036444">
    <property type="entry name" value="PLipase_A2_dom_sf"/>
</dbReference>
<dbReference type="InterPro" id="IPR033113">
    <property type="entry name" value="PLipase_A2_His_AS"/>
</dbReference>
<dbReference type="PANTHER" id="PTHR11716">
    <property type="entry name" value="PHOSPHOLIPASE A2 FAMILY MEMBER"/>
    <property type="match status" value="1"/>
</dbReference>
<dbReference type="PANTHER" id="PTHR11716:SF9">
    <property type="entry name" value="PHOSPHOLIPASE A2, MEMBRANE ASSOCIATED"/>
    <property type="match status" value="1"/>
</dbReference>
<dbReference type="Pfam" id="PF00068">
    <property type="entry name" value="Phospholip_A2_1"/>
    <property type="match status" value="1"/>
</dbReference>
<dbReference type="PRINTS" id="PR00389">
    <property type="entry name" value="PHPHLIPASEA2"/>
</dbReference>
<dbReference type="SMART" id="SM00085">
    <property type="entry name" value="PA2c"/>
    <property type="match status" value="1"/>
</dbReference>
<dbReference type="SUPFAM" id="SSF48619">
    <property type="entry name" value="Phospholipase A2, PLA2"/>
    <property type="match status" value="1"/>
</dbReference>
<dbReference type="PROSITE" id="PS00119">
    <property type="entry name" value="PA2_ASP"/>
    <property type="match status" value="1"/>
</dbReference>
<dbReference type="PROSITE" id="PS00118">
    <property type="entry name" value="PA2_HIS"/>
    <property type="match status" value="1"/>
</dbReference>
<name>PA2BA_CRODU</name>
<reference key="1">
    <citation type="journal article" date="1991" name="Biochim. Biophys. Acta">
        <title>Analysis of cDNAs encoding the two subunits of crotoxin, a phospholipase A2 neurotoxin from rattlesnake venom: the acidic non enzymatic subunit derives from a phospholipase A2-like precursor.</title>
        <authorList>
            <person name="Bouchier C."/>
            <person name="Boulain J.-C."/>
            <person name="Bon C."/>
            <person name="Menez A."/>
        </authorList>
    </citation>
    <scope>NUCLEOTIDE SEQUENCE [MRNA]</scope>
    <source>
        <tissue>Venom gland</tissue>
    </source>
</reference>
<reference key="2">
    <citation type="journal article" date="1994" name="Eur. J. Biochem.">
        <title>The origin of the diversity of crotoxin isoforms in the venom of Crotalus durissus terrificus.</title>
        <authorList>
            <person name="Faure G."/>
            <person name="Choumet V."/>
            <person name="Bouchier C."/>
            <person name="Camoin L."/>
            <person name="Guillaume J.-L."/>
            <person name="Monegier B."/>
            <person name="Vuilhorgne M."/>
            <person name="Bon C."/>
        </authorList>
    </citation>
    <scope>PROTEIN SEQUENCE OF 17-49</scope>
    <scope>MASS SPECTROMETRY</scope>
    <source>
        <tissue>Venom</tissue>
    </source>
</reference>
<reference key="3">
    <citation type="journal article" date="2004" name="Biochem. J.">
        <title>Molecular evolution and structure-function relationships of crotoxin-like and asparagine-6-containing phospholipases A2 in pit viper venoms.</title>
        <authorList>
            <person name="Chen Y.-H."/>
            <person name="Wang Y.-M."/>
            <person name="Hseu M.-J."/>
            <person name="Tsai I.-H."/>
        </authorList>
    </citation>
    <scope>PROTEIN SEQUENCE OF 17-39</scope>
    <scope>FUNCTION</scope>
    <scope>MASS SPECTROMETRY</scope>
    <source>
        <tissue>Venom</tissue>
    </source>
</reference>
<reference key="4">
    <citation type="journal article" date="1993" name="Eur. J. Biochem.">
        <title>Comparison of crotoxin isoforms reveals that stability of the complex plays a major role in its pharmacological action.</title>
        <authorList>
            <person name="Faure G."/>
            <person name="Harvey A.L."/>
            <person name="Thomson E."/>
            <person name="Saliou B."/>
            <person name="Radvanyi F."/>
            <person name="Bon C."/>
        </authorList>
    </citation>
    <scope>BIOPHYSICOCHEMICAL PROPERTIES</scope>
    <scope>SUBUNIT</scope>
    <scope>LETHAL DOSES</scope>
</reference>
<reference key="5">
    <citation type="journal article" date="1996" name="Biochem. Pharmacol.">
        <title>Regulation of epidermal growth factor receptor activity by crotoxin, a snake venom phospholipase A2 toxin. A novel growth inhibitory mechanism.</title>
        <authorList>
            <person name="Donato N.J."/>
            <person name="Martin C.A."/>
            <person name="Perez M."/>
            <person name="Newman R.A."/>
            <person name="Vidal J.C."/>
            <person name="Etcheverry M."/>
        </authorList>
    </citation>
    <scope>FUNCTION</scope>
</reference>
<reference key="6">
    <citation type="journal article" date="2000" name="Eur. J. Biochem.">
        <title>Interaction of the neurotoxic and nontoxic secretory phospholipases A2 with the crotoxin inhibitor from Crotalus serum.</title>
        <authorList>
            <person name="Faure G."/>
            <person name="Villela C."/>
            <person name="Perales J."/>
            <person name="Bon C."/>
        </authorList>
    </citation>
    <scope>INHIBITION OF CROTOXIN BY CICS</scope>
</reference>
<reference key="7">
    <citation type="journal article" date="2007" name="BMC Struct. Biol.">
        <title>Characterization of a human coagulation factor Xa-binding site on Viperidae snake venom phospholipases A2 by affinity binding studies and molecular bioinformatics.</title>
        <authorList>
            <person name="Faure G."/>
            <person name="Gowda V.T."/>
            <person name="Maroun R.C."/>
        </authorList>
    </citation>
    <scope>FUNCTION AS AN ANTICOAGULANT</scope>
    <scope>SITE</scope>
    <scope>3D-STRUCTURE MODELING</scope>
</reference>
<reference key="8">
    <citation type="journal article" date="2010" name="Toxicon">
        <title>Crotoxin: novel activities for a classic beta-neurotoxin.</title>
        <authorList>
            <person name="Sampaio S.C."/>
            <person name="Hyslop S."/>
            <person name="Fontes M.R."/>
            <person name="Prado-Franceschi J."/>
            <person name="Zambelli V.O."/>
            <person name="Magro A.J."/>
            <person name="Brigatte P."/>
            <person name="Gutierrez V.P."/>
            <person name="Cury Y."/>
        </authorList>
    </citation>
    <scope>REVIEW</scope>
</reference>
<reference key="9">
    <citation type="journal article" date="2011" name="J. Mol. Biol.">
        <title>Crystal structure of crotoxin reveals key residues involved in the stability and toxicity of this potent heterodimeric beta-neurotoxin.</title>
        <authorList>
            <person name="Faure G."/>
            <person name="Xu H."/>
            <person name="Saul F.A."/>
        </authorList>
    </citation>
    <scope>SITES</scope>
</reference>
<reference key="10">
    <citation type="journal article" date="2016" name="J. Mol. Biol.">
        <title>Rattlesnake phospholipase A2 increases CFTR-chloride channel current and corrects DelF508CFTR dysfunction: impact in cystic fibrosis.</title>
        <authorList>
            <person name="Faure G."/>
            <person name="Bakouh N."/>
            <person name="Lourdel S."/>
            <person name="Odolczyk N."/>
            <person name="Premchandar A."/>
            <person name="Servel N."/>
            <person name="Hatton A."/>
            <person name="Ostrowski M.K."/>
            <person name="Xu H."/>
            <person name="Saul F.A."/>
            <person name="Moquereau C."/>
            <person name="Bitam S."/>
            <person name="Pranke I."/>
            <person name="Planelles G."/>
            <person name="Teulon J."/>
            <person name="Herrmann H."/>
            <person name="Roldan A."/>
            <person name="Zielenkiewicz P."/>
            <person name="Dadlez M."/>
            <person name="Lukacs G.L."/>
            <person name="Sermet-Gaudelus I."/>
            <person name="Ollero M."/>
            <person name="Corringer P.J."/>
            <person name="Edelman A."/>
        </authorList>
    </citation>
    <scope>PHARMACEUTICAL</scope>
    <scope>SUBUNIT</scope>
</reference>
<reference key="11">
    <citation type="journal article" date="2008" name="Proteins">
        <title>Insights into the role of oligomeric state on the biological activities of crotoxin: crystal structure of a tetrameric phospholipase A2 formed by two isoforms of crotoxin B from Crotalus durissus terrificus venom.</title>
        <authorList>
            <person name="Marchi-Salvador D.P."/>
            <person name="Correa L.C."/>
            <person name="Magro A.J."/>
            <person name="Oliveira C.Z."/>
            <person name="Soares A.M."/>
            <person name="Fontes M.R."/>
        </authorList>
    </citation>
    <scope>X-RAY CRYSTALLOGRAPHY (2.28 ANGSTROMS) OF 17-138</scope>
    <scope>DISULFIDE BONDS</scope>
    <source>
        <tissue>Venom</tissue>
    </source>
</reference>
<sequence>MRALWIVAVLLVGVEGSLLQFNKMIKFETRKNAVPFYAFYGCYCGWGGQGRPKDATDRCCFVHDCCYGKLAKCNTKWDIYRYSLKSGYITCGKGTWCKEQICECDRVAAECLRRSLSTYKNEYMFYPDSRCREPSETC</sequence>
<feature type="signal peptide" evidence="5 11">
    <location>
        <begin position="1"/>
        <end position="16"/>
    </location>
</feature>
<feature type="chain" id="PRO_0000022861" description="Phospholipase A2 crotoxin basic chain CBa2">
    <location>
        <begin position="17"/>
        <end position="138"/>
    </location>
</feature>
<feature type="active site" evidence="2">
    <location>
        <position position="63"/>
    </location>
</feature>
<feature type="active site" evidence="2">
    <location>
        <position position="105"/>
    </location>
</feature>
<feature type="binding site" evidence="2">
    <location>
        <position position="43"/>
    </location>
    <ligand>
        <name>Ca(2+)</name>
        <dbReference type="ChEBI" id="CHEBI:29108"/>
    </ligand>
</feature>
<feature type="binding site" evidence="2">
    <location>
        <position position="45"/>
    </location>
    <ligand>
        <name>Ca(2+)</name>
        <dbReference type="ChEBI" id="CHEBI:29108"/>
    </ligand>
</feature>
<feature type="binding site" evidence="2">
    <location>
        <position position="47"/>
    </location>
    <ligand>
        <name>Ca(2+)</name>
        <dbReference type="ChEBI" id="CHEBI:29108"/>
    </ligand>
</feature>
<feature type="binding site" evidence="2">
    <location>
        <position position="64"/>
    </location>
    <ligand>
        <name>Ca(2+)</name>
        <dbReference type="ChEBI" id="CHEBI:29108"/>
    </ligand>
</feature>
<feature type="site" description="Responsible for the weak stability and toxicity" evidence="9">
    <location>
        <position position="17"/>
    </location>
</feature>
<feature type="site" description="Putative interfacial binding surface (IBS)" evidence="9">
    <location>
        <position position="18"/>
    </location>
</feature>
<feature type="site" description="Putative interfacial binding surface (IBS)" evidence="9">
    <location>
        <position position="19"/>
    </location>
</feature>
<feature type="site" description="Putative interfacial binding surface (IBS)" evidence="9">
    <location>
        <position position="23"/>
    </location>
</feature>
<feature type="site" description="Putative interfacial binding surface (IBS)" evidence="9">
    <location>
        <position position="26"/>
    </location>
</feature>
<feature type="site" description="Putative interfacial binding surface (IBS)" evidence="9">
    <location>
        <position position="33"/>
    </location>
</feature>
<feature type="site" description="Putative interfacial binding surface (IBS)" evidence="9">
    <location>
        <position position="34"/>
    </location>
</feature>
<feature type="site" description="Putative interfacial binding surface (IBS)" evidence="9">
    <location>
        <position position="38"/>
    </location>
</feature>
<feature type="site" description="Putative interfacial binding surface (IBS)" evidence="9">
    <location>
        <position position="39"/>
    </location>
</feature>
<feature type="site" description="Putative interfacial binding surface (IBS)" evidence="9">
    <location>
        <position position="76"/>
    </location>
</feature>
<feature type="site" description="Putative interfacial binding surface (IBS)" evidence="9">
    <location>
        <position position="119"/>
    </location>
</feature>
<feature type="site" description="Responsible for the reduced anticoagulant activity (compared with CBc)" evidence="6">
    <location>
        <position position="133"/>
    </location>
</feature>
<feature type="disulfide bond" evidence="7 15">
    <location>
        <begin position="42"/>
        <end position="131"/>
    </location>
</feature>
<feature type="disulfide bond" evidence="7 15">
    <location>
        <begin position="44"/>
        <end position="60"/>
    </location>
</feature>
<feature type="disulfide bond" evidence="7 15">
    <location>
        <begin position="59"/>
        <end position="111"/>
    </location>
</feature>
<feature type="disulfide bond" evidence="7 15">
    <location>
        <begin position="65"/>
        <end position="138"/>
    </location>
</feature>
<feature type="disulfide bond" evidence="7 15">
    <location>
        <begin position="66"/>
        <end position="104"/>
    </location>
</feature>
<feature type="disulfide bond" evidence="7 15">
    <location>
        <begin position="73"/>
        <end position="97"/>
    </location>
</feature>
<feature type="disulfide bond" evidence="7 15">
    <location>
        <begin position="91"/>
        <end position="102"/>
    </location>
</feature>
<feature type="sequence conflict" description="In Ref. 3; AA sequence." evidence="13" ref="3">
    <original>V</original>
    <variation>I</variation>
    <location>
        <position position="34"/>
    </location>
</feature>
<feature type="helix" evidence="16">
    <location>
        <begin position="19"/>
        <end position="29"/>
    </location>
</feature>
<feature type="helix" evidence="16">
    <location>
        <begin position="33"/>
        <end position="36"/>
    </location>
</feature>
<feature type="turn" evidence="16">
    <location>
        <begin position="37"/>
        <end position="39"/>
    </location>
</feature>
<feature type="turn" evidence="16">
    <location>
        <begin position="41"/>
        <end position="43"/>
    </location>
</feature>
<feature type="helix" evidence="16">
    <location>
        <begin position="55"/>
        <end position="69"/>
    </location>
</feature>
<feature type="helix" evidence="16">
    <location>
        <begin position="71"/>
        <end position="73"/>
    </location>
</feature>
<feature type="strand" evidence="16">
    <location>
        <begin position="82"/>
        <end position="85"/>
    </location>
</feature>
<feature type="strand" evidence="16">
    <location>
        <begin position="88"/>
        <end position="91"/>
    </location>
</feature>
<feature type="helix" evidence="16">
    <location>
        <begin position="96"/>
        <end position="114"/>
    </location>
</feature>
<feature type="helix" evidence="16">
    <location>
        <begin position="115"/>
        <end position="117"/>
    </location>
</feature>
<feature type="helix" evidence="16">
    <location>
        <begin position="121"/>
        <end position="123"/>
    </location>
</feature>
<feature type="helix" evidence="16">
    <location>
        <begin position="128"/>
        <end position="131"/>
    </location>
</feature>
<organism>
    <name type="scientific">Crotalus durissus terrificus</name>
    <name type="common">South American rattlesnake</name>
    <dbReference type="NCBI Taxonomy" id="8732"/>
    <lineage>
        <taxon>Eukaryota</taxon>
        <taxon>Metazoa</taxon>
        <taxon>Chordata</taxon>
        <taxon>Craniata</taxon>
        <taxon>Vertebrata</taxon>
        <taxon>Euteleostomi</taxon>
        <taxon>Lepidosauria</taxon>
        <taxon>Squamata</taxon>
        <taxon>Bifurcata</taxon>
        <taxon>Unidentata</taxon>
        <taxon>Episquamata</taxon>
        <taxon>Toxicofera</taxon>
        <taxon>Serpentes</taxon>
        <taxon>Colubroidea</taxon>
        <taxon>Viperidae</taxon>
        <taxon>Crotalinae</taxon>
        <taxon>Crotalus</taxon>
    </lineage>
</organism>
<proteinExistence type="evidence at protein level"/>
<keyword id="KW-0002">3D-structure</keyword>
<keyword id="KW-1203">Blood coagulation cascade inhibiting toxin</keyword>
<keyword id="KW-0106">Calcium</keyword>
<keyword id="KW-0903">Direct protein sequencing</keyword>
<keyword id="KW-1015">Disulfide bond</keyword>
<keyword id="KW-1199">Hemostasis impairing toxin</keyword>
<keyword id="KW-0378">Hydrolase</keyword>
<keyword id="KW-0872">Ion channel impairing toxin</keyword>
<keyword id="KW-0442">Lipid degradation</keyword>
<keyword id="KW-0443">Lipid metabolism</keyword>
<keyword id="KW-0479">Metal-binding</keyword>
<keyword id="KW-0528">Neurotoxin</keyword>
<keyword id="KW-0582">Pharmaceutical</keyword>
<keyword id="KW-0638">Presynaptic neurotoxin</keyword>
<keyword id="KW-0964">Secreted</keyword>
<keyword id="KW-0732">Signal</keyword>
<keyword id="KW-0800">Toxin</keyword>